<name>KLH38_DANRE</name>
<protein>
    <recommendedName>
        <fullName>Kelch-like protein 38</fullName>
    </recommendedName>
</protein>
<reference key="1">
    <citation type="journal article" date="2013" name="Nature">
        <title>The zebrafish reference genome sequence and its relationship to the human genome.</title>
        <authorList>
            <person name="Howe K."/>
            <person name="Clark M.D."/>
            <person name="Torroja C.F."/>
            <person name="Torrance J."/>
            <person name="Berthelot C."/>
            <person name="Muffato M."/>
            <person name="Collins J.E."/>
            <person name="Humphray S."/>
            <person name="McLaren K."/>
            <person name="Matthews L."/>
            <person name="McLaren S."/>
            <person name="Sealy I."/>
            <person name="Caccamo M."/>
            <person name="Churcher C."/>
            <person name="Scott C."/>
            <person name="Barrett J.C."/>
            <person name="Koch R."/>
            <person name="Rauch G.J."/>
            <person name="White S."/>
            <person name="Chow W."/>
            <person name="Kilian B."/>
            <person name="Quintais L.T."/>
            <person name="Guerra-Assuncao J.A."/>
            <person name="Zhou Y."/>
            <person name="Gu Y."/>
            <person name="Yen J."/>
            <person name="Vogel J.H."/>
            <person name="Eyre T."/>
            <person name="Redmond S."/>
            <person name="Banerjee R."/>
            <person name="Chi J."/>
            <person name="Fu B."/>
            <person name="Langley E."/>
            <person name="Maguire S.F."/>
            <person name="Laird G.K."/>
            <person name="Lloyd D."/>
            <person name="Kenyon E."/>
            <person name="Donaldson S."/>
            <person name="Sehra H."/>
            <person name="Almeida-King J."/>
            <person name="Loveland J."/>
            <person name="Trevanion S."/>
            <person name="Jones M."/>
            <person name="Quail M."/>
            <person name="Willey D."/>
            <person name="Hunt A."/>
            <person name="Burton J."/>
            <person name="Sims S."/>
            <person name="McLay K."/>
            <person name="Plumb B."/>
            <person name="Davis J."/>
            <person name="Clee C."/>
            <person name="Oliver K."/>
            <person name="Clark R."/>
            <person name="Riddle C."/>
            <person name="Elliot D."/>
            <person name="Threadgold G."/>
            <person name="Harden G."/>
            <person name="Ware D."/>
            <person name="Begum S."/>
            <person name="Mortimore B."/>
            <person name="Kerry G."/>
            <person name="Heath P."/>
            <person name="Phillimore B."/>
            <person name="Tracey A."/>
            <person name="Corby N."/>
            <person name="Dunn M."/>
            <person name="Johnson C."/>
            <person name="Wood J."/>
            <person name="Clark S."/>
            <person name="Pelan S."/>
            <person name="Griffiths G."/>
            <person name="Smith M."/>
            <person name="Glithero R."/>
            <person name="Howden P."/>
            <person name="Barker N."/>
            <person name="Lloyd C."/>
            <person name="Stevens C."/>
            <person name="Harley J."/>
            <person name="Holt K."/>
            <person name="Panagiotidis G."/>
            <person name="Lovell J."/>
            <person name="Beasley H."/>
            <person name="Henderson C."/>
            <person name="Gordon D."/>
            <person name="Auger K."/>
            <person name="Wright D."/>
            <person name="Collins J."/>
            <person name="Raisen C."/>
            <person name="Dyer L."/>
            <person name="Leung K."/>
            <person name="Robertson L."/>
            <person name="Ambridge K."/>
            <person name="Leongamornlert D."/>
            <person name="McGuire S."/>
            <person name="Gilderthorp R."/>
            <person name="Griffiths C."/>
            <person name="Manthravadi D."/>
            <person name="Nichol S."/>
            <person name="Barker G."/>
            <person name="Whitehead S."/>
            <person name="Kay M."/>
            <person name="Brown J."/>
            <person name="Murnane C."/>
            <person name="Gray E."/>
            <person name="Humphries M."/>
            <person name="Sycamore N."/>
            <person name="Barker D."/>
            <person name="Saunders D."/>
            <person name="Wallis J."/>
            <person name="Babbage A."/>
            <person name="Hammond S."/>
            <person name="Mashreghi-Mohammadi M."/>
            <person name="Barr L."/>
            <person name="Martin S."/>
            <person name="Wray P."/>
            <person name="Ellington A."/>
            <person name="Matthews N."/>
            <person name="Ellwood M."/>
            <person name="Woodmansey R."/>
            <person name="Clark G."/>
            <person name="Cooper J."/>
            <person name="Tromans A."/>
            <person name="Grafham D."/>
            <person name="Skuce C."/>
            <person name="Pandian R."/>
            <person name="Andrews R."/>
            <person name="Harrison E."/>
            <person name="Kimberley A."/>
            <person name="Garnett J."/>
            <person name="Fosker N."/>
            <person name="Hall R."/>
            <person name="Garner P."/>
            <person name="Kelly D."/>
            <person name="Bird C."/>
            <person name="Palmer S."/>
            <person name="Gehring I."/>
            <person name="Berger A."/>
            <person name="Dooley C.M."/>
            <person name="Ersan-Urun Z."/>
            <person name="Eser C."/>
            <person name="Geiger H."/>
            <person name="Geisler M."/>
            <person name="Karotki L."/>
            <person name="Kirn A."/>
            <person name="Konantz J."/>
            <person name="Konantz M."/>
            <person name="Oberlander M."/>
            <person name="Rudolph-Geiger S."/>
            <person name="Teucke M."/>
            <person name="Lanz C."/>
            <person name="Raddatz G."/>
            <person name="Osoegawa K."/>
            <person name="Zhu B."/>
            <person name="Rapp A."/>
            <person name="Widaa S."/>
            <person name="Langford C."/>
            <person name="Yang F."/>
            <person name="Schuster S.C."/>
            <person name="Carter N.P."/>
            <person name="Harrow J."/>
            <person name="Ning Z."/>
            <person name="Herrero J."/>
            <person name="Searle S.M."/>
            <person name="Enright A."/>
            <person name="Geisler R."/>
            <person name="Plasterk R.H."/>
            <person name="Lee C."/>
            <person name="Westerfield M."/>
            <person name="de Jong P.J."/>
            <person name="Zon L.I."/>
            <person name="Postlethwait J.H."/>
            <person name="Nusslein-Volhard C."/>
            <person name="Hubbard T.J."/>
            <person name="Roest Crollius H."/>
            <person name="Rogers J."/>
            <person name="Stemple D.L."/>
        </authorList>
    </citation>
    <scope>NUCLEOTIDE SEQUENCE [LARGE SCALE GENOMIC DNA]</scope>
    <source>
        <strain>Tuebingen</strain>
    </source>
</reference>
<sequence length="583" mass="66842">MASTSTEVFPFKDQELSTQLLFQLNILRQEQIFTDVILCTEDKEIPCHRNVLVSSSPYFRAMFCSNFRESSQARVDLKGIASEVIECVVDYIYTGSITITMELVLPLMQAASMLQYGRLFEACSTFLQEQLNPENCLSMIRLSEILHCETLKERAKEMAVRCFSDVAASEDFCELTLPELMCYLEDDRLCAEEEQVFETLLAWIHHDPFSRRGAIHDLFKKVRLRFIHPTYLFQFIANDPLVQSSTLCTEIIESVRRLMFSVSAKCTKELKPLWTTPRRYTCRETLVVVGGRKNNEQTSREALLYDERTQRWQWLAKLPLRLYKAAYVCIHSILYVVGGLSLSLVSGDSAVSATVYTLSLKTNQWRTAEPMLEPRYAHQCVSYLHFIFALGGIGQDKQISNTVERYNSMFNQWEVMAPMPTAVLHPAVAANDQRIYVFGGEDALQNPVRLIQVYHISRNLWSRLETRTVKNVCAPAAVIEDKIYIVGGYTRRVIAYDTKANKFVKCTNMKERRMHHAATVINNKLYVTGGRFLNSHDVIEDSDCFECYDPKTDVWTSKGSLPYKLFDHGSLPLICVSNRPNPP</sequence>
<evidence type="ECO:0000255" key="1">
    <source>
        <dbReference type="PROSITE-ProRule" id="PRU00037"/>
    </source>
</evidence>
<dbReference type="EMBL" id="BX004966">
    <property type="protein sequence ID" value="CAK11118.1"/>
    <property type="molecule type" value="Genomic_DNA"/>
</dbReference>
<dbReference type="RefSeq" id="NP_001038350.1">
    <property type="nucleotide sequence ID" value="NM_001044885.1"/>
</dbReference>
<dbReference type="RefSeq" id="XP_005159683.1">
    <property type="nucleotide sequence ID" value="XM_005159626.3"/>
</dbReference>
<dbReference type="RefSeq" id="XP_009292600.1">
    <property type="nucleotide sequence ID" value="XM_009294325.2"/>
</dbReference>
<dbReference type="SMR" id="Q1LYM6"/>
<dbReference type="FunCoup" id="Q1LYM6">
    <property type="interactions" value="194"/>
</dbReference>
<dbReference type="STRING" id="7955.ENSDARP00000052077"/>
<dbReference type="PaxDb" id="7955-ENSDARP00000052077"/>
<dbReference type="Ensembl" id="ENSDART00000052078">
    <property type="protein sequence ID" value="ENSDARP00000052077"/>
    <property type="gene ID" value="ENSDARG00000031383"/>
</dbReference>
<dbReference type="Ensembl" id="ENSDART00000177791">
    <property type="protein sequence ID" value="ENSDARP00000143526"/>
    <property type="gene ID" value="ENSDARG00000116001"/>
</dbReference>
<dbReference type="GeneID" id="559083"/>
<dbReference type="KEGG" id="dre:559083"/>
<dbReference type="AGR" id="ZFIN:ZDB-GENE-060503-737"/>
<dbReference type="CTD" id="559083"/>
<dbReference type="ZFIN" id="ZDB-GENE-060503-737">
    <property type="gene designation" value="klhl38a"/>
</dbReference>
<dbReference type="eggNOG" id="KOG4441">
    <property type="taxonomic scope" value="Eukaryota"/>
</dbReference>
<dbReference type="HOGENOM" id="CLU_004253_14_6_1"/>
<dbReference type="InParanoid" id="Q1LYM6"/>
<dbReference type="OMA" id="EVALTCF"/>
<dbReference type="OrthoDB" id="45365at2759"/>
<dbReference type="PhylomeDB" id="Q1LYM6"/>
<dbReference type="TreeFam" id="TF329218"/>
<dbReference type="PRO" id="PR:Q1LYM6"/>
<dbReference type="Proteomes" id="UP000000437">
    <property type="component" value="Alternate scaffold 19"/>
</dbReference>
<dbReference type="Proteomes" id="UP000000437">
    <property type="component" value="Chromosome 19"/>
</dbReference>
<dbReference type="Bgee" id="ENSDARG00000031383">
    <property type="expression patterns" value="Expressed in muscle tissue and 5 other cell types or tissues"/>
</dbReference>
<dbReference type="ExpressionAtlas" id="Q1LYM6">
    <property type="expression patterns" value="baseline"/>
</dbReference>
<dbReference type="GO" id="GO:0031463">
    <property type="term" value="C:Cul3-RING ubiquitin ligase complex"/>
    <property type="evidence" value="ECO:0000318"/>
    <property type="project" value="GO_Central"/>
</dbReference>
<dbReference type="GO" id="GO:0005737">
    <property type="term" value="C:cytoplasm"/>
    <property type="evidence" value="ECO:0000318"/>
    <property type="project" value="GO_Central"/>
</dbReference>
<dbReference type="GO" id="GO:1990756">
    <property type="term" value="F:ubiquitin-like ligase-substrate adaptor activity"/>
    <property type="evidence" value="ECO:0000318"/>
    <property type="project" value="GO_Central"/>
</dbReference>
<dbReference type="GO" id="GO:0043161">
    <property type="term" value="P:proteasome-mediated ubiquitin-dependent protein catabolic process"/>
    <property type="evidence" value="ECO:0000318"/>
    <property type="project" value="GO_Central"/>
</dbReference>
<dbReference type="CDD" id="cd18476">
    <property type="entry name" value="BACK_KLHL38"/>
    <property type="match status" value="1"/>
</dbReference>
<dbReference type="CDD" id="cd18268">
    <property type="entry name" value="BTB_POZ_KLHL38"/>
    <property type="match status" value="1"/>
</dbReference>
<dbReference type="FunFam" id="1.25.40.420:FF:000001">
    <property type="entry name" value="Kelch-like family member 12"/>
    <property type="match status" value="1"/>
</dbReference>
<dbReference type="Gene3D" id="1.25.40.420">
    <property type="match status" value="1"/>
</dbReference>
<dbReference type="Gene3D" id="2.120.10.80">
    <property type="entry name" value="Kelch-type beta propeller"/>
    <property type="match status" value="2"/>
</dbReference>
<dbReference type="Gene3D" id="3.30.710.10">
    <property type="entry name" value="Potassium Channel Kv1.1, Chain A"/>
    <property type="match status" value="1"/>
</dbReference>
<dbReference type="InterPro" id="IPR011705">
    <property type="entry name" value="BACK"/>
</dbReference>
<dbReference type="InterPro" id="IPR056737">
    <property type="entry name" value="Beta-prop_ATRN-MKLN-like"/>
</dbReference>
<dbReference type="InterPro" id="IPR017096">
    <property type="entry name" value="BTB-kelch_protein"/>
</dbReference>
<dbReference type="InterPro" id="IPR000210">
    <property type="entry name" value="BTB/POZ_dom"/>
</dbReference>
<dbReference type="InterPro" id="IPR015915">
    <property type="entry name" value="Kelch-typ_b-propeller"/>
</dbReference>
<dbReference type="InterPro" id="IPR006652">
    <property type="entry name" value="Kelch_1"/>
</dbReference>
<dbReference type="InterPro" id="IPR030568">
    <property type="entry name" value="KLHL38_BACK"/>
</dbReference>
<dbReference type="InterPro" id="IPR011333">
    <property type="entry name" value="SKP1/BTB/POZ_sf"/>
</dbReference>
<dbReference type="PANTHER" id="PTHR45632:SF8">
    <property type="entry name" value="KELCH-LIKE PROTEIN 34"/>
    <property type="match status" value="1"/>
</dbReference>
<dbReference type="PANTHER" id="PTHR45632">
    <property type="entry name" value="LD33804P"/>
    <property type="match status" value="1"/>
</dbReference>
<dbReference type="Pfam" id="PF07707">
    <property type="entry name" value="BACK"/>
    <property type="match status" value="1"/>
</dbReference>
<dbReference type="Pfam" id="PF24981">
    <property type="entry name" value="Beta-prop_ATRN-LZTR1"/>
    <property type="match status" value="1"/>
</dbReference>
<dbReference type="Pfam" id="PF00651">
    <property type="entry name" value="BTB"/>
    <property type="match status" value="1"/>
</dbReference>
<dbReference type="PIRSF" id="PIRSF037037">
    <property type="entry name" value="Kelch-like_protein_gigaxonin"/>
    <property type="match status" value="1"/>
</dbReference>
<dbReference type="SMART" id="SM00875">
    <property type="entry name" value="BACK"/>
    <property type="match status" value="1"/>
</dbReference>
<dbReference type="SMART" id="SM00225">
    <property type="entry name" value="BTB"/>
    <property type="match status" value="1"/>
</dbReference>
<dbReference type="SMART" id="SM00612">
    <property type="entry name" value="Kelch"/>
    <property type="match status" value="6"/>
</dbReference>
<dbReference type="SUPFAM" id="SSF117281">
    <property type="entry name" value="Kelch motif"/>
    <property type="match status" value="1"/>
</dbReference>
<dbReference type="SUPFAM" id="SSF54695">
    <property type="entry name" value="POZ domain"/>
    <property type="match status" value="1"/>
</dbReference>
<dbReference type="PROSITE" id="PS50097">
    <property type="entry name" value="BTB"/>
    <property type="match status" value="1"/>
</dbReference>
<organism>
    <name type="scientific">Danio rerio</name>
    <name type="common">Zebrafish</name>
    <name type="synonym">Brachydanio rerio</name>
    <dbReference type="NCBI Taxonomy" id="7955"/>
    <lineage>
        <taxon>Eukaryota</taxon>
        <taxon>Metazoa</taxon>
        <taxon>Chordata</taxon>
        <taxon>Craniata</taxon>
        <taxon>Vertebrata</taxon>
        <taxon>Euteleostomi</taxon>
        <taxon>Actinopterygii</taxon>
        <taxon>Neopterygii</taxon>
        <taxon>Teleostei</taxon>
        <taxon>Ostariophysi</taxon>
        <taxon>Cypriniformes</taxon>
        <taxon>Danionidae</taxon>
        <taxon>Danioninae</taxon>
        <taxon>Danio</taxon>
    </lineage>
</organism>
<feature type="chain" id="PRO_0000325812" description="Kelch-like protein 38">
    <location>
        <begin position="1"/>
        <end position="583"/>
    </location>
</feature>
<feature type="domain" description="BTB" evidence="1">
    <location>
        <begin position="34"/>
        <end position="101"/>
    </location>
</feature>
<feature type="domain" description="BACK">
    <location>
        <begin position="136"/>
        <end position="237"/>
    </location>
</feature>
<feature type="repeat" description="Kelch 1">
    <location>
        <begin position="285"/>
        <end position="332"/>
    </location>
</feature>
<feature type="repeat" description="Kelch 2">
    <location>
        <begin position="333"/>
        <end position="385"/>
    </location>
</feature>
<feature type="repeat" description="Kelch 3">
    <location>
        <begin position="386"/>
        <end position="433"/>
    </location>
</feature>
<feature type="repeat" description="Kelch 4">
    <location>
        <begin position="435"/>
        <end position="481"/>
    </location>
</feature>
<feature type="repeat" description="Kelch 5">
    <location>
        <begin position="482"/>
        <end position="523"/>
    </location>
</feature>
<feature type="repeat" description="Kelch 6">
    <location>
        <begin position="525"/>
        <end position="575"/>
    </location>
</feature>
<gene>
    <name type="primary">klhl38</name>
    <name type="ORF">si:dkey-5e12.1</name>
</gene>
<accession>Q1LYM6</accession>
<proteinExistence type="predicted"/>
<keyword id="KW-0880">Kelch repeat</keyword>
<keyword id="KW-1185">Reference proteome</keyword>
<keyword id="KW-0677">Repeat</keyword>